<proteinExistence type="inferred from homology"/>
<reference key="1">
    <citation type="journal article" date="2008" name="J. Bacteriol.">
        <title>The pangenome structure of Escherichia coli: comparative genomic analysis of E. coli commensal and pathogenic isolates.</title>
        <authorList>
            <person name="Rasko D.A."/>
            <person name="Rosovitz M.J."/>
            <person name="Myers G.S.A."/>
            <person name="Mongodin E.F."/>
            <person name="Fricke W.F."/>
            <person name="Gajer P."/>
            <person name="Crabtree J."/>
            <person name="Sebaihia M."/>
            <person name="Thomson N.R."/>
            <person name="Chaudhuri R."/>
            <person name="Henderson I.R."/>
            <person name="Sperandio V."/>
            <person name="Ravel J."/>
        </authorList>
    </citation>
    <scope>NUCLEOTIDE SEQUENCE [LARGE SCALE GENOMIC DNA]</scope>
    <source>
        <strain>HS</strain>
    </source>
</reference>
<dbReference type="EC" id="6.5.1.2" evidence="1"/>
<dbReference type="EMBL" id="CP000802">
    <property type="protein sequence ID" value="ABV06811.1"/>
    <property type="molecule type" value="Genomic_DNA"/>
</dbReference>
<dbReference type="RefSeq" id="WP_000443700.1">
    <property type="nucleotide sequence ID" value="NC_009800.1"/>
</dbReference>
<dbReference type="SMR" id="A8A2Q7"/>
<dbReference type="KEGG" id="ecx:EcHS_A2546"/>
<dbReference type="HOGENOM" id="CLU_007764_2_1_6"/>
<dbReference type="GO" id="GO:0005829">
    <property type="term" value="C:cytosol"/>
    <property type="evidence" value="ECO:0007669"/>
    <property type="project" value="TreeGrafter"/>
</dbReference>
<dbReference type="GO" id="GO:0003677">
    <property type="term" value="F:DNA binding"/>
    <property type="evidence" value="ECO:0007669"/>
    <property type="project" value="InterPro"/>
</dbReference>
<dbReference type="GO" id="GO:0003911">
    <property type="term" value="F:DNA ligase (NAD+) activity"/>
    <property type="evidence" value="ECO:0007669"/>
    <property type="project" value="UniProtKB-UniRule"/>
</dbReference>
<dbReference type="GO" id="GO:0046872">
    <property type="term" value="F:metal ion binding"/>
    <property type="evidence" value="ECO:0007669"/>
    <property type="project" value="UniProtKB-KW"/>
</dbReference>
<dbReference type="GO" id="GO:0006281">
    <property type="term" value="P:DNA repair"/>
    <property type="evidence" value="ECO:0007669"/>
    <property type="project" value="UniProtKB-KW"/>
</dbReference>
<dbReference type="GO" id="GO:0006260">
    <property type="term" value="P:DNA replication"/>
    <property type="evidence" value="ECO:0007669"/>
    <property type="project" value="UniProtKB-KW"/>
</dbReference>
<dbReference type="CDD" id="cd17748">
    <property type="entry name" value="BRCT_DNA_ligase_like"/>
    <property type="match status" value="1"/>
</dbReference>
<dbReference type="CDD" id="cd00114">
    <property type="entry name" value="LIGANc"/>
    <property type="match status" value="1"/>
</dbReference>
<dbReference type="FunFam" id="1.10.150.20:FF:000006">
    <property type="entry name" value="DNA ligase"/>
    <property type="match status" value="1"/>
</dbReference>
<dbReference type="FunFam" id="1.10.150.20:FF:000007">
    <property type="entry name" value="DNA ligase"/>
    <property type="match status" value="1"/>
</dbReference>
<dbReference type="FunFam" id="1.10.287.610:FF:000002">
    <property type="entry name" value="DNA ligase"/>
    <property type="match status" value="1"/>
</dbReference>
<dbReference type="FunFam" id="2.40.50.140:FF:000012">
    <property type="entry name" value="DNA ligase"/>
    <property type="match status" value="1"/>
</dbReference>
<dbReference type="FunFam" id="3.30.470.30:FF:000001">
    <property type="entry name" value="DNA ligase"/>
    <property type="match status" value="1"/>
</dbReference>
<dbReference type="FunFam" id="3.40.50.10190:FF:000004">
    <property type="entry name" value="DNA ligase"/>
    <property type="match status" value="1"/>
</dbReference>
<dbReference type="FunFam" id="6.20.10.30:FF:000001">
    <property type="entry name" value="DNA ligase"/>
    <property type="match status" value="1"/>
</dbReference>
<dbReference type="Gene3D" id="6.20.10.30">
    <property type="match status" value="1"/>
</dbReference>
<dbReference type="Gene3D" id="1.10.150.20">
    <property type="entry name" value="5' to 3' exonuclease, C-terminal subdomain"/>
    <property type="match status" value="2"/>
</dbReference>
<dbReference type="Gene3D" id="3.40.50.10190">
    <property type="entry name" value="BRCT domain"/>
    <property type="match status" value="1"/>
</dbReference>
<dbReference type="Gene3D" id="3.30.470.30">
    <property type="entry name" value="DNA ligase/mRNA capping enzyme"/>
    <property type="match status" value="1"/>
</dbReference>
<dbReference type="Gene3D" id="1.10.287.610">
    <property type="entry name" value="Helix hairpin bin"/>
    <property type="match status" value="1"/>
</dbReference>
<dbReference type="Gene3D" id="2.40.50.140">
    <property type="entry name" value="Nucleic acid-binding proteins"/>
    <property type="match status" value="1"/>
</dbReference>
<dbReference type="HAMAP" id="MF_01588">
    <property type="entry name" value="DNA_ligase_A"/>
    <property type="match status" value="1"/>
</dbReference>
<dbReference type="InterPro" id="IPR001357">
    <property type="entry name" value="BRCT_dom"/>
</dbReference>
<dbReference type="InterPro" id="IPR036420">
    <property type="entry name" value="BRCT_dom_sf"/>
</dbReference>
<dbReference type="InterPro" id="IPR041663">
    <property type="entry name" value="DisA/LigA_HHH"/>
</dbReference>
<dbReference type="InterPro" id="IPR001679">
    <property type="entry name" value="DNA_ligase"/>
</dbReference>
<dbReference type="InterPro" id="IPR018239">
    <property type="entry name" value="DNA_ligase_AS"/>
</dbReference>
<dbReference type="InterPro" id="IPR033136">
    <property type="entry name" value="DNA_ligase_CS"/>
</dbReference>
<dbReference type="InterPro" id="IPR013839">
    <property type="entry name" value="DNAligase_adenylation"/>
</dbReference>
<dbReference type="InterPro" id="IPR013840">
    <property type="entry name" value="DNAligase_N"/>
</dbReference>
<dbReference type="InterPro" id="IPR003583">
    <property type="entry name" value="Hlx-hairpin-Hlx_DNA-bd_motif"/>
</dbReference>
<dbReference type="InterPro" id="IPR012340">
    <property type="entry name" value="NA-bd_OB-fold"/>
</dbReference>
<dbReference type="InterPro" id="IPR004150">
    <property type="entry name" value="NAD_DNA_ligase_OB"/>
</dbReference>
<dbReference type="InterPro" id="IPR010994">
    <property type="entry name" value="RuvA_2-like"/>
</dbReference>
<dbReference type="InterPro" id="IPR004149">
    <property type="entry name" value="Znf_DNAligase_C4"/>
</dbReference>
<dbReference type="NCBIfam" id="TIGR00575">
    <property type="entry name" value="dnlj"/>
    <property type="match status" value="1"/>
</dbReference>
<dbReference type="NCBIfam" id="NF005932">
    <property type="entry name" value="PRK07956.1"/>
    <property type="match status" value="1"/>
</dbReference>
<dbReference type="PANTHER" id="PTHR23389">
    <property type="entry name" value="CHROMOSOME TRANSMISSION FIDELITY FACTOR 18"/>
    <property type="match status" value="1"/>
</dbReference>
<dbReference type="PANTHER" id="PTHR23389:SF9">
    <property type="entry name" value="DNA LIGASE"/>
    <property type="match status" value="1"/>
</dbReference>
<dbReference type="Pfam" id="PF00533">
    <property type="entry name" value="BRCT"/>
    <property type="match status" value="1"/>
</dbReference>
<dbReference type="Pfam" id="PF01653">
    <property type="entry name" value="DNA_ligase_aden"/>
    <property type="match status" value="1"/>
</dbReference>
<dbReference type="Pfam" id="PF03120">
    <property type="entry name" value="DNA_ligase_OB"/>
    <property type="match status" value="1"/>
</dbReference>
<dbReference type="Pfam" id="PF03119">
    <property type="entry name" value="DNA_ligase_ZBD"/>
    <property type="match status" value="1"/>
</dbReference>
<dbReference type="Pfam" id="PF12826">
    <property type="entry name" value="HHH_2"/>
    <property type="match status" value="1"/>
</dbReference>
<dbReference type="Pfam" id="PF14520">
    <property type="entry name" value="HHH_5"/>
    <property type="match status" value="1"/>
</dbReference>
<dbReference type="Pfam" id="PF22745">
    <property type="entry name" value="Nlig-Ia"/>
    <property type="match status" value="1"/>
</dbReference>
<dbReference type="PIRSF" id="PIRSF001604">
    <property type="entry name" value="LigA"/>
    <property type="match status" value="1"/>
</dbReference>
<dbReference type="SMART" id="SM00292">
    <property type="entry name" value="BRCT"/>
    <property type="match status" value="1"/>
</dbReference>
<dbReference type="SMART" id="SM00278">
    <property type="entry name" value="HhH1"/>
    <property type="match status" value="4"/>
</dbReference>
<dbReference type="SMART" id="SM00532">
    <property type="entry name" value="LIGANc"/>
    <property type="match status" value="1"/>
</dbReference>
<dbReference type="SUPFAM" id="SSF52113">
    <property type="entry name" value="BRCT domain"/>
    <property type="match status" value="1"/>
</dbReference>
<dbReference type="SUPFAM" id="SSF56091">
    <property type="entry name" value="DNA ligase/mRNA capping enzyme, catalytic domain"/>
    <property type="match status" value="1"/>
</dbReference>
<dbReference type="SUPFAM" id="SSF50249">
    <property type="entry name" value="Nucleic acid-binding proteins"/>
    <property type="match status" value="1"/>
</dbReference>
<dbReference type="SUPFAM" id="SSF47781">
    <property type="entry name" value="RuvA domain 2-like"/>
    <property type="match status" value="1"/>
</dbReference>
<dbReference type="PROSITE" id="PS50172">
    <property type="entry name" value="BRCT"/>
    <property type="match status" value="1"/>
</dbReference>
<dbReference type="PROSITE" id="PS01055">
    <property type="entry name" value="DNA_LIGASE_N1"/>
    <property type="match status" value="1"/>
</dbReference>
<dbReference type="PROSITE" id="PS01056">
    <property type="entry name" value="DNA_LIGASE_N2"/>
    <property type="match status" value="1"/>
</dbReference>
<name>DNLJ_ECOHS</name>
<organism>
    <name type="scientific">Escherichia coli O9:H4 (strain HS)</name>
    <dbReference type="NCBI Taxonomy" id="331112"/>
    <lineage>
        <taxon>Bacteria</taxon>
        <taxon>Pseudomonadati</taxon>
        <taxon>Pseudomonadota</taxon>
        <taxon>Gammaproteobacteria</taxon>
        <taxon>Enterobacterales</taxon>
        <taxon>Enterobacteriaceae</taxon>
        <taxon>Escherichia</taxon>
    </lineage>
</organism>
<keyword id="KW-0227">DNA damage</keyword>
<keyword id="KW-0234">DNA repair</keyword>
<keyword id="KW-0235">DNA replication</keyword>
<keyword id="KW-0436">Ligase</keyword>
<keyword id="KW-0460">Magnesium</keyword>
<keyword id="KW-0464">Manganese</keyword>
<keyword id="KW-0479">Metal-binding</keyword>
<keyword id="KW-0520">NAD</keyword>
<keyword id="KW-0862">Zinc</keyword>
<evidence type="ECO:0000255" key="1">
    <source>
        <dbReference type="HAMAP-Rule" id="MF_01588"/>
    </source>
</evidence>
<comment type="function">
    <text evidence="1">DNA ligase that catalyzes the formation of phosphodiester linkages between 5'-phosphoryl and 3'-hydroxyl groups in double-stranded DNA using NAD as a coenzyme and as the energy source for the reaction. It is essential for DNA replication and repair of damaged DNA.</text>
</comment>
<comment type="catalytic activity">
    <reaction evidence="1">
        <text>NAD(+) + (deoxyribonucleotide)n-3'-hydroxyl + 5'-phospho-(deoxyribonucleotide)m = (deoxyribonucleotide)n+m + AMP + beta-nicotinamide D-nucleotide.</text>
        <dbReference type="EC" id="6.5.1.2"/>
    </reaction>
</comment>
<comment type="cofactor">
    <cofactor evidence="1">
        <name>Mg(2+)</name>
        <dbReference type="ChEBI" id="CHEBI:18420"/>
    </cofactor>
    <cofactor evidence="1">
        <name>Mn(2+)</name>
        <dbReference type="ChEBI" id="CHEBI:29035"/>
    </cofactor>
</comment>
<comment type="similarity">
    <text evidence="1">Belongs to the NAD-dependent DNA ligase family. LigA subfamily.</text>
</comment>
<sequence length="671" mass="73579">MESIEQQLTELRTTLRHHEYLYHVMDAPEIPDAEYDRLMRELRELETKHPELITPDSPTQRVGAAPLAAFSQIRHEVPMLSLDNVFDEESFLAFNKRVQDRLKSNEKVTWCCELKLDGLAVSILYENGVLVSAATRGDGTTGEDITSNVRTIRAIPLKLHGENIPARLEVRGEVFLPQAGFEKINEDARRTGGKVFANPRNAAAGSLRQLDPRITAKRPLTFFCYGVGVLEGGELPDTHLGRLLQFKQWGLPVSDRVTLCESAEEVLAFYHKVEEDRPTLGFDIDGVVIKVNSLAQQEQLGFVARAPRWAVAFKFPAQEQMTFVRDVEFQVGRTGAITPVARLEPVHVAGVLVSNATLHNADEIERLGLRIGDKVVIRRAGDVIPQVVNVVLSERPEDTREVVFPTHCPVCGSDVERVEGEAVARCTGGLICGAQRKESLKHFVSRRAMDVDGMGDKIIDQLVEKEYVHTPADLFKLTAGKLTGLERMGPKSAQNVVNALEKAKETTFARFLYALGIREVGEATAAGLAAYFGTLEALEAASIEELQKVPDVGIVVASHVHNFFAEESNRNVISELLAEGVHWPAPIVINAEEIDSPFAGKTVVLTGSLSQMSRDDAKARLVELGAKVAGSVSKKTDLVIAGEAAGSKLAKAQELGIEVIDEAEMLRLLGS</sequence>
<accession>A8A2Q7</accession>
<gene>
    <name evidence="1" type="primary">ligA</name>
    <name type="ordered locus">EcHS_A2546</name>
</gene>
<feature type="chain" id="PRO_0000340349" description="DNA ligase">
    <location>
        <begin position="1"/>
        <end position="671"/>
    </location>
</feature>
<feature type="domain" description="BRCT" evidence="1">
    <location>
        <begin position="593"/>
        <end position="671"/>
    </location>
</feature>
<feature type="active site" description="N6-AMP-lysine intermediate" evidence="1">
    <location>
        <position position="115"/>
    </location>
</feature>
<feature type="binding site" evidence="1">
    <location>
        <begin position="32"/>
        <end position="36"/>
    </location>
    <ligand>
        <name>NAD(+)</name>
        <dbReference type="ChEBI" id="CHEBI:57540"/>
    </ligand>
</feature>
<feature type="binding site" evidence="1">
    <location>
        <begin position="81"/>
        <end position="82"/>
    </location>
    <ligand>
        <name>NAD(+)</name>
        <dbReference type="ChEBI" id="CHEBI:57540"/>
    </ligand>
</feature>
<feature type="binding site" evidence="1">
    <location>
        <position position="113"/>
    </location>
    <ligand>
        <name>NAD(+)</name>
        <dbReference type="ChEBI" id="CHEBI:57540"/>
    </ligand>
</feature>
<feature type="binding site" evidence="1">
    <location>
        <position position="136"/>
    </location>
    <ligand>
        <name>NAD(+)</name>
        <dbReference type="ChEBI" id="CHEBI:57540"/>
    </ligand>
</feature>
<feature type="binding site" evidence="1">
    <location>
        <position position="173"/>
    </location>
    <ligand>
        <name>NAD(+)</name>
        <dbReference type="ChEBI" id="CHEBI:57540"/>
    </ligand>
</feature>
<feature type="binding site" evidence="1">
    <location>
        <position position="290"/>
    </location>
    <ligand>
        <name>NAD(+)</name>
        <dbReference type="ChEBI" id="CHEBI:57540"/>
    </ligand>
</feature>
<feature type="binding site" evidence="1">
    <location>
        <position position="314"/>
    </location>
    <ligand>
        <name>NAD(+)</name>
        <dbReference type="ChEBI" id="CHEBI:57540"/>
    </ligand>
</feature>
<feature type="binding site" evidence="1">
    <location>
        <position position="408"/>
    </location>
    <ligand>
        <name>Zn(2+)</name>
        <dbReference type="ChEBI" id="CHEBI:29105"/>
    </ligand>
</feature>
<feature type="binding site" evidence="1">
    <location>
        <position position="411"/>
    </location>
    <ligand>
        <name>Zn(2+)</name>
        <dbReference type="ChEBI" id="CHEBI:29105"/>
    </ligand>
</feature>
<feature type="binding site" evidence="1">
    <location>
        <position position="426"/>
    </location>
    <ligand>
        <name>Zn(2+)</name>
        <dbReference type="ChEBI" id="CHEBI:29105"/>
    </ligand>
</feature>
<feature type="binding site" evidence="1">
    <location>
        <position position="432"/>
    </location>
    <ligand>
        <name>Zn(2+)</name>
        <dbReference type="ChEBI" id="CHEBI:29105"/>
    </ligand>
</feature>
<protein>
    <recommendedName>
        <fullName evidence="1">DNA ligase</fullName>
        <ecNumber evidence="1">6.5.1.2</ecNumber>
    </recommendedName>
    <alternativeName>
        <fullName evidence="1">Polydeoxyribonucleotide synthase [NAD(+)]</fullName>
    </alternativeName>
</protein>